<sequence>MIIPWQGLAPDTLDNLIESFVLREGTDYGEHERSLEQKVADVKRQLQSGEAVLVWSELHETVNIMPKKQFRE</sequence>
<name>YHEU_SALPA</name>
<proteinExistence type="inferred from homology"/>
<reference key="1">
    <citation type="journal article" date="2004" name="Nat. Genet.">
        <title>Comparison of genome degradation in Paratyphi A and Typhi, human-restricted serovars of Salmonella enterica that cause typhoid.</title>
        <authorList>
            <person name="McClelland M."/>
            <person name="Sanderson K.E."/>
            <person name="Clifton S.W."/>
            <person name="Latreille P."/>
            <person name="Porwollik S."/>
            <person name="Sabo A."/>
            <person name="Meyer R."/>
            <person name="Bieri T."/>
            <person name="Ozersky P."/>
            <person name="McLellan M."/>
            <person name="Harkins C.R."/>
            <person name="Wang C."/>
            <person name="Nguyen C."/>
            <person name="Berghoff A."/>
            <person name="Elliott G."/>
            <person name="Kohlberg S."/>
            <person name="Strong C."/>
            <person name="Du F."/>
            <person name="Carter J."/>
            <person name="Kremizki C."/>
            <person name="Layman D."/>
            <person name="Leonard S."/>
            <person name="Sun H."/>
            <person name="Fulton L."/>
            <person name="Nash W."/>
            <person name="Miner T."/>
            <person name="Minx P."/>
            <person name="Delehaunty K."/>
            <person name="Fronick C."/>
            <person name="Magrini V."/>
            <person name="Nhan M."/>
            <person name="Warren W."/>
            <person name="Florea L."/>
            <person name="Spieth J."/>
            <person name="Wilson R.K."/>
        </authorList>
    </citation>
    <scope>NUCLEOTIDE SEQUENCE [LARGE SCALE GENOMIC DNA]</scope>
    <source>
        <strain>ATCC 9150 / SARB42</strain>
    </source>
</reference>
<feature type="chain" id="PRO_1000045173" description="UPF0270 protein YheU">
    <location>
        <begin position="1"/>
        <end position="72"/>
    </location>
</feature>
<comment type="similarity">
    <text evidence="1">Belongs to the UPF0270 family.</text>
</comment>
<organism>
    <name type="scientific">Salmonella paratyphi A (strain ATCC 9150 / SARB42)</name>
    <dbReference type="NCBI Taxonomy" id="295319"/>
    <lineage>
        <taxon>Bacteria</taxon>
        <taxon>Pseudomonadati</taxon>
        <taxon>Pseudomonadota</taxon>
        <taxon>Gammaproteobacteria</taxon>
        <taxon>Enterobacterales</taxon>
        <taxon>Enterobacteriaceae</taxon>
        <taxon>Salmonella</taxon>
    </lineage>
</organism>
<protein>
    <recommendedName>
        <fullName evidence="1">UPF0270 protein YheU</fullName>
    </recommendedName>
</protein>
<accession>Q5PLV3</accession>
<evidence type="ECO:0000255" key="1">
    <source>
        <dbReference type="HAMAP-Rule" id="MF_00690"/>
    </source>
</evidence>
<dbReference type="EMBL" id="CP000026">
    <property type="protein sequence ID" value="AAV79144.1"/>
    <property type="molecule type" value="Genomic_DNA"/>
</dbReference>
<dbReference type="RefSeq" id="WP_000586568.1">
    <property type="nucleotide sequence ID" value="NC_006511.1"/>
</dbReference>
<dbReference type="SMR" id="Q5PLV3"/>
<dbReference type="KEGG" id="spt:SPA3329"/>
<dbReference type="HOGENOM" id="CLU_186759_1_0_6"/>
<dbReference type="Proteomes" id="UP000008185">
    <property type="component" value="Chromosome"/>
</dbReference>
<dbReference type="Gene3D" id="1.10.10.610">
    <property type="entry name" value="YehU-like"/>
    <property type="match status" value="1"/>
</dbReference>
<dbReference type="HAMAP" id="MF_00690">
    <property type="entry name" value="UPF0270"/>
    <property type="match status" value="1"/>
</dbReference>
<dbReference type="InterPro" id="IPR010648">
    <property type="entry name" value="UPF0270"/>
</dbReference>
<dbReference type="InterPro" id="IPR036685">
    <property type="entry name" value="YehU-like_sf"/>
</dbReference>
<dbReference type="NCBIfam" id="NF003438">
    <property type="entry name" value="PRK04966.1"/>
    <property type="match status" value="1"/>
</dbReference>
<dbReference type="Pfam" id="PF06794">
    <property type="entry name" value="UPF0270"/>
    <property type="match status" value="1"/>
</dbReference>
<dbReference type="PIRSF" id="PIRSF006169">
    <property type="entry name" value="UCP006169"/>
    <property type="match status" value="1"/>
</dbReference>
<dbReference type="SUPFAM" id="SSF118001">
    <property type="entry name" value="YehU-like"/>
    <property type="match status" value="1"/>
</dbReference>
<gene>
    <name evidence="1" type="primary">yheU</name>
    <name type="ordered locus">SPA3329</name>
</gene>